<gene>
    <name type="ordered locus">BCA_0546</name>
</gene>
<accession>C1EWG2</accession>
<name>NTDP_BACC3</name>
<feature type="chain" id="PRO_1000185470" description="Nucleoside triphosphate/diphosphate phosphatase">
    <location>
        <begin position="1"/>
        <end position="176"/>
    </location>
</feature>
<feature type="active site" description="Proton donor" evidence="1">
    <location>
        <position position="23"/>
    </location>
</feature>
<feature type="binding site" evidence="1">
    <location>
        <position position="87"/>
    </location>
    <ligand>
        <name>Mg(2+)</name>
        <dbReference type="ChEBI" id="CHEBI:18420"/>
        <label>1</label>
    </ligand>
</feature>
<feature type="binding site" evidence="1">
    <location>
        <position position="103"/>
    </location>
    <ligand>
        <name>Mg(2+)</name>
        <dbReference type="ChEBI" id="CHEBI:18420"/>
        <label>1</label>
    </ligand>
</feature>
<feature type="binding site" evidence="1">
    <location>
        <position position="105"/>
    </location>
    <ligand>
        <name>Mg(2+)</name>
        <dbReference type="ChEBI" id="CHEBI:18420"/>
        <label>2</label>
    </ligand>
</feature>
<feature type="binding site" evidence="1">
    <location>
        <position position="107"/>
    </location>
    <ligand>
        <name>Mg(2+)</name>
        <dbReference type="ChEBI" id="CHEBI:18420"/>
        <label>1</label>
    </ligand>
</feature>
<feature type="binding site" evidence="1">
    <location>
        <position position="107"/>
    </location>
    <ligand>
        <name>Mg(2+)</name>
        <dbReference type="ChEBI" id="CHEBI:18420"/>
        <label>2</label>
    </ligand>
</feature>
<feature type="binding site" evidence="1">
    <location>
        <position position="120"/>
    </location>
    <ligand>
        <name>Mg(2+)</name>
        <dbReference type="ChEBI" id="CHEBI:18420"/>
        <label>2</label>
    </ligand>
</feature>
<feature type="binding site" evidence="1">
    <location>
        <position position="123"/>
    </location>
    <ligand>
        <name>Mg(2+)</name>
        <dbReference type="ChEBI" id="CHEBI:18420"/>
        <label>2</label>
    </ligand>
</feature>
<dbReference type="EC" id="3.6.1.15" evidence="1"/>
<dbReference type="EC" id="3.6.1.6" evidence="1"/>
<dbReference type="EMBL" id="CP001407">
    <property type="protein sequence ID" value="ACO27883.1"/>
    <property type="molecule type" value="Genomic_DNA"/>
</dbReference>
<dbReference type="RefSeq" id="WP_000506628.1">
    <property type="nucleotide sequence ID" value="NZ_CP009318.1"/>
</dbReference>
<dbReference type="SMR" id="C1EWG2"/>
<dbReference type="KEGG" id="bcx:BCA_0546"/>
<dbReference type="PATRIC" id="fig|572264.18.peg.532"/>
<dbReference type="Proteomes" id="UP000002210">
    <property type="component" value="Chromosome"/>
</dbReference>
<dbReference type="GO" id="GO:0000287">
    <property type="term" value="F:magnesium ion binding"/>
    <property type="evidence" value="ECO:0007669"/>
    <property type="project" value="UniProtKB-UniRule"/>
</dbReference>
<dbReference type="GO" id="GO:0017110">
    <property type="term" value="F:nucleoside diphosphate phosphatase activity"/>
    <property type="evidence" value="ECO:0007669"/>
    <property type="project" value="UniProtKB-UniRule"/>
</dbReference>
<dbReference type="GO" id="GO:0017111">
    <property type="term" value="F:ribonucleoside triphosphate phosphatase activity"/>
    <property type="evidence" value="ECO:0007669"/>
    <property type="project" value="UniProtKB-UniRule"/>
</dbReference>
<dbReference type="Gene3D" id="2.40.380.10">
    <property type="entry name" value="FomD-like"/>
    <property type="match status" value="1"/>
</dbReference>
<dbReference type="HAMAP" id="MF_01568">
    <property type="entry name" value="Ntdp"/>
    <property type="match status" value="1"/>
</dbReference>
<dbReference type="InterPro" id="IPR007295">
    <property type="entry name" value="DUF402"/>
</dbReference>
<dbReference type="InterPro" id="IPR035930">
    <property type="entry name" value="FomD-like_sf"/>
</dbReference>
<dbReference type="InterPro" id="IPR050212">
    <property type="entry name" value="Ntdp-like"/>
</dbReference>
<dbReference type="InterPro" id="IPR016882">
    <property type="entry name" value="SA1684"/>
</dbReference>
<dbReference type="NCBIfam" id="NF010183">
    <property type="entry name" value="PRK13662.1"/>
    <property type="match status" value="1"/>
</dbReference>
<dbReference type="PANTHER" id="PTHR39159">
    <property type="match status" value="1"/>
</dbReference>
<dbReference type="PANTHER" id="PTHR39159:SF1">
    <property type="entry name" value="UPF0374 PROTEIN YGAC"/>
    <property type="match status" value="1"/>
</dbReference>
<dbReference type="Pfam" id="PF04167">
    <property type="entry name" value="DUF402"/>
    <property type="match status" value="1"/>
</dbReference>
<dbReference type="PIRSF" id="PIRSF028345">
    <property type="entry name" value="UCP028345"/>
    <property type="match status" value="1"/>
</dbReference>
<dbReference type="SUPFAM" id="SSF159234">
    <property type="entry name" value="FomD-like"/>
    <property type="match status" value="1"/>
</dbReference>
<proteinExistence type="inferred from homology"/>
<sequence length="176" mass="21009">MGFPKEGEKVQIHSYKHNGSIHRMWEETTILKGTQSLVIGANDRTVVTESDGRTWITREPAICYFHANYWFNVIGMLREEGVYYYCNLSSPFAYDSEALKYIDYDLDIKVYPDMTYTLLDEDEYEKHSQIMQYPPVIDTILKRNVAQLTQWIHQRKGPFAPDFVDMWYERYLMYRN</sequence>
<evidence type="ECO:0000255" key="1">
    <source>
        <dbReference type="HAMAP-Rule" id="MF_01568"/>
    </source>
</evidence>
<reference key="1">
    <citation type="submission" date="2009-02" db="EMBL/GenBank/DDBJ databases">
        <title>Genome sequence of Bacillus cereus 03BB102.</title>
        <authorList>
            <person name="Dodson R.J."/>
            <person name="Jackson P."/>
            <person name="Munk A.C."/>
            <person name="Brettin T."/>
            <person name="Bruce D."/>
            <person name="Detter C."/>
            <person name="Tapia R."/>
            <person name="Han C."/>
            <person name="Sutton G."/>
            <person name="Sims D."/>
        </authorList>
    </citation>
    <scope>NUCLEOTIDE SEQUENCE [LARGE SCALE GENOMIC DNA]</scope>
    <source>
        <strain>03BB102</strain>
    </source>
</reference>
<organism>
    <name type="scientific">Bacillus cereus (strain 03BB102)</name>
    <dbReference type="NCBI Taxonomy" id="572264"/>
    <lineage>
        <taxon>Bacteria</taxon>
        <taxon>Bacillati</taxon>
        <taxon>Bacillota</taxon>
        <taxon>Bacilli</taxon>
        <taxon>Bacillales</taxon>
        <taxon>Bacillaceae</taxon>
        <taxon>Bacillus</taxon>
        <taxon>Bacillus cereus group</taxon>
    </lineage>
</organism>
<keyword id="KW-0378">Hydrolase</keyword>
<keyword id="KW-0460">Magnesium</keyword>
<keyword id="KW-0479">Metal-binding</keyword>
<protein>
    <recommendedName>
        <fullName evidence="1">Nucleoside triphosphate/diphosphate phosphatase</fullName>
        <ecNumber evidence="1">3.6.1.15</ecNumber>
        <ecNumber evidence="1">3.6.1.6</ecNumber>
    </recommendedName>
</protein>
<comment type="function">
    <text evidence="1">Has nucleoside phosphatase activity towards nucleoside triphosphates and nucleoside diphosphates.</text>
</comment>
<comment type="catalytic activity">
    <reaction evidence="1">
        <text>a ribonucleoside 5'-triphosphate + H2O = a ribonucleoside 5'-diphosphate + phosphate + H(+)</text>
        <dbReference type="Rhea" id="RHEA:23680"/>
        <dbReference type="ChEBI" id="CHEBI:15377"/>
        <dbReference type="ChEBI" id="CHEBI:15378"/>
        <dbReference type="ChEBI" id="CHEBI:43474"/>
        <dbReference type="ChEBI" id="CHEBI:57930"/>
        <dbReference type="ChEBI" id="CHEBI:61557"/>
        <dbReference type="EC" id="3.6.1.15"/>
    </reaction>
</comment>
<comment type="catalytic activity">
    <reaction evidence="1">
        <text>a ribonucleoside 5'-diphosphate + H2O = a ribonucleoside 5'-phosphate + phosphate + H(+)</text>
        <dbReference type="Rhea" id="RHEA:36799"/>
        <dbReference type="ChEBI" id="CHEBI:15377"/>
        <dbReference type="ChEBI" id="CHEBI:15378"/>
        <dbReference type="ChEBI" id="CHEBI:43474"/>
        <dbReference type="ChEBI" id="CHEBI:57930"/>
        <dbReference type="ChEBI" id="CHEBI:58043"/>
        <dbReference type="EC" id="3.6.1.6"/>
    </reaction>
</comment>
<comment type="cofactor">
    <cofactor evidence="1">
        <name>Mg(2+)</name>
        <dbReference type="ChEBI" id="CHEBI:18420"/>
    </cofactor>
</comment>
<comment type="similarity">
    <text evidence="1">Belongs to the Ntdp family.</text>
</comment>